<keyword id="KW-0106">Calcium</keyword>
<keyword id="KW-0109">Calcium transport</keyword>
<keyword id="KW-0256">Endoplasmic reticulum</keyword>
<keyword id="KW-0406">Ion transport</keyword>
<keyword id="KW-0472">Membrane</keyword>
<keyword id="KW-1185">Reference proteome</keyword>
<keyword id="KW-0732">Signal</keyword>
<keyword id="KW-0812">Transmembrane</keyword>
<keyword id="KW-1133">Transmembrane helix</keyword>
<keyword id="KW-0813">Transport</keyword>
<accession>Q08E24</accession>
<protein>
    <recommendedName>
        <fullName>Store-operated calcium entry-associated regulatory factor</fullName>
        <shortName>SARAF</shortName>
        <shortName>SOCE-associated regulatory factor</shortName>
    </recommendedName>
    <alternativeName>
        <fullName>Transmembrane protein 66</fullName>
    </alternativeName>
</protein>
<name>SARAF_BOVIN</name>
<reference key="1">
    <citation type="submission" date="2006-09" db="EMBL/GenBank/DDBJ databases">
        <authorList>
            <consortium name="NIH - Mammalian Gene Collection (MGC) project"/>
        </authorList>
    </citation>
    <scope>NUCLEOTIDE SEQUENCE [LARGE SCALE MRNA]</scope>
    <source>
        <strain>Hereford</strain>
        <tissue>Hippocampus</tissue>
    </source>
</reference>
<feature type="signal peptide" evidence="3">
    <location>
        <begin position="1"/>
        <end position="30"/>
    </location>
</feature>
<feature type="chain" id="PRO_0000328114" description="Store-operated calcium entry-associated regulatory factor">
    <location>
        <begin position="31"/>
        <end position="335"/>
    </location>
</feature>
<feature type="topological domain" description="Lumenal" evidence="3">
    <location>
        <begin position="31"/>
        <end position="172"/>
    </location>
</feature>
<feature type="transmembrane region" description="Helical" evidence="3">
    <location>
        <begin position="173"/>
        <end position="193"/>
    </location>
</feature>
<feature type="topological domain" description="Cytoplasmic" evidence="3">
    <location>
        <begin position="194"/>
        <end position="335"/>
    </location>
</feature>
<feature type="region of interest" description="Disordered" evidence="4">
    <location>
        <begin position="203"/>
        <end position="259"/>
    </location>
</feature>
<feature type="region of interest" description="Disordered" evidence="4">
    <location>
        <begin position="300"/>
        <end position="335"/>
    </location>
</feature>
<feature type="compositionally biased region" description="Low complexity" evidence="4">
    <location>
        <begin position="237"/>
        <end position="248"/>
    </location>
</feature>
<evidence type="ECO:0000250" key="1"/>
<evidence type="ECO:0000250" key="2">
    <source>
        <dbReference type="UniProtKB" id="Q96BY9"/>
    </source>
</evidence>
<evidence type="ECO:0000255" key="3"/>
<evidence type="ECO:0000256" key="4">
    <source>
        <dbReference type="SAM" id="MobiDB-lite"/>
    </source>
</evidence>
<evidence type="ECO:0000305" key="5"/>
<proteinExistence type="evidence at transcript level"/>
<comment type="function">
    <text evidence="1">Negative regulator of store-operated Ca(2+) entry (SOCE) involved in protecting cells from Ca(2+) overfilling. In response to cytosolic Ca(2+) elevation after endoplasmic reticulum Ca(2+) refilling, promotes a slow inactivation of STIM (STIM1 or STIM2)-dependent SOCE activity: possibly act by facilitating the deoligomerization of STIM to efficiently turn off ORAI when the endoplasmic reticulum lumen is filled with the appropriate Ca(2+) levels, and thus preventing the overload of the cell with excessive Ca(2+) ions (By similarity).</text>
</comment>
<comment type="subunit">
    <text evidence="2">Interacts with STIM1; the interaction is inhibited by the interaction of STIM1 with EFHB.</text>
</comment>
<comment type="subcellular location">
    <subcellularLocation>
        <location evidence="1">Endoplasmic reticulum membrane</location>
        <topology evidence="1">Single-pass type I membrane protein</topology>
    </subcellularLocation>
    <text evidence="1">Translocates to the endoplasmic reticulum-plasma membrane (ER-PM) region in a STIM1-dependent manner following cytosolic Ca(2+) elevation.</text>
</comment>
<comment type="domain">
    <text evidence="1">The cytoplasmic C-terminal region mediates interaction with STIM1, while the N-terminal lumenal region mediates regulation of SOCE activity.</text>
</comment>
<comment type="similarity">
    <text evidence="5">Belongs to the SARAF family.</text>
</comment>
<organism>
    <name type="scientific">Bos taurus</name>
    <name type="common">Bovine</name>
    <dbReference type="NCBI Taxonomy" id="9913"/>
    <lineage>
        <taxon>Eukaryota</taxon>
        <taxon>Metazoa</taxon>
        <taxon>Chordata</taxon>
        <taxon>Craniata</taxon>
        <taxon>Vertebrata</taxon>
        <taxon>Euteleostomi</taxon>
        <taxon>Mammalia</taxon>
        <taxon>Eutheria</taxon>
        <taxon>Laurasiatheria</taxon>
        <taxon>Artiodactyla</taxon>
        <taxon>Ruminantia</taxon>
        <taxon>Pecora</taxon>
        <taxon>Bovidae</taxon>
        <taxon>Bovinae</taxon>
        <taxon>Bos</taxon>
    </lineage>
</organism>
<sequence>MAAAGGPAAAGRCALSSLLLLLLVVGTAQCWDERDRILLRDIKALTLYYDRYTTSRRLEPIPQLKCVGGTAGCDSYTPKVIQCQNRGWDGYDVQWECKTDLDVAYKFGKTVVSCEGYESSEDQYVLRGSCGLEYQLDYTELGLKKLRESGKEHGFNSFSNYYSKLYSPESSSLGGVVTIVVLLAIAFGVYKFFLSDGHESPPPYSEDPPYSHRYQRFSSSAGPPPAGFKSEFTGPHGATAGFGSAFTGQQGHEHSGPGFWTGLGTGGILGYLFGSNRAATPFSDSWYPSYPPSYTSTWNSRAYSPLRGGPGSSSACSGSEPRTRTASGYGGTRRR</sequence>
<gene>
    <name type="primary">SARAF</name>
    <name type="synonym">TMEM66</name>
</gene>
<dbReference type="EMBL" id="BC123456">
    <property type="protein sequence ID" value="AAI23457.1"/>
    <property type="molecule type" value="mRNA"/>
</dbReference>
<dbReference type="RefSeq" id="NP_001070324.1">
    <property type="nucleotide sequence ID" value="NM_001076856.1"/>
</dbReference>
<dbReference type="SMR" id="Q08E24"/>
<dbReference type="FunCoup" id="Q08E24">
    <property type="interactions" value="1099"/>
</dbReference>
<dbReference type="STRING" id="9913.ENSBTAP00000018052"/>
<dbReference type="PaxDb" id="9913-ENSBTAP00000018052"/>
<dbReference type="Ensembl" id="ENSBTAT00000018052.7">
    <property type="protein sequence ID" value="ENSBTAP00000018052.5"/>
    <property type="gene ID" value="ENSBTAG00000013579.7"/>
</dbReference>
<dbReference type="GeneID" id="515461"/>
<dbReference type="KEGG" id="bta:515461"/>
<dbReference type="CTD" id="51669"/>
<dbReference type="VEuPathDB" id="HostDB:ENSBTAG00000013579"/>
<dbReference type="VGNC" id="VGNC:34288">
    <property type="gene designation" value="SARAF"/>
</dbReference>
<dbReference type="eggNOG" id="ENOG502QT6Y">
    <property type="taxonomic scope" value="Eukaryota"/>
</dbReference>
<dbReference type="GeneTree" id="ENSGT00390000013419"/>
<dbReference type="HOGENOM" id="CLU_046802_0_1_1"/>
<dbReference type="InParanoid" id="Q08E24"/>
<dbReference type="OMA" id="WILKGSC"/>
<dbReference type="OrthoDB" id="20303at2759"/>
<dbReference type="TreeFam" id="TF314811"/>
<dbReference type="Proteomes" id="UP000009136">
    <property type="component" value="Chromosome 27"/>
</dbReference>
<dbReference type="Bgee" id="ENSBTAG00000013579">
    <property type="expression patterns" value="Expressed in prostate gland and 105 other cell types or tissues"/>
</dbReference>
<dbReference type="GO" id="GO:0005789">
    <property type="term" value="C:endoplasmic reticulum membrane"/>
    <property type="evidence" value="ECO:0000250"/>
    <property type="project" value="UniProtKB"/>
</dbReference>
<dbReference type="GO" id="GO:0140268">
    <property type="term" value="C:endoplasmic reticulum-plasma membrane contact site"/>
    <property type="evidence" value="ECO:0000250"/>
    <property type="project" value="UniProtKB"/>
</dbReference>
<dbReference type="GO" id="GO:0006816">
    <property type="term" value="P:calcium ion transport"/>
    <property type="evidence" value="ECO:0007669"/>
    <property type="project" value="UniProtKB-KW"/>
</dbReference>
<dbReference type="GO" id="GO:2001256">
    <property type="term" value="P:regulation of store-operated calcium entry"/>
    <property type="evidence" value="ECO:0000250"/>
    <property type="project" value="UniProtKB"/>
</dbReference>
<dbReference type="InterPro" id="IPR009567">
    <property type="entry name" value="SARAF"/>
</dbReference>
<dbReference type="PANTHER" id="PTHR15929">
    <property type="entry name" value="STORE-OPERATED CALCIUM ENTRY-ASSOCIATED REGULATORY FACTOR"/>
    <property type="match status" value="1"/>
</dbReference>
<dbReference type="PANTHER" id="PTHR15929:SF0">
    <property type="entry name" value="STORE-OPERATED CALCIUM ENTRY-ASSOCIATED REGULATORY FACTOR"/>
    <property type="match status" value="1"/>
</dbReference>
<dbReference type="Pfam" id="PF06682">
    <property type="entry name" value="SARAF"/>
    <property type="match status" value="1"/>
</dbReference>